<keyword id="KW-0175">Coiled coil</keyword>
<keyword id="KW-1035">Host cytoplasm</keyword>
<keyword id="KW-0945">Host-virus interaction</keyword>
<keyword id="KW-0694">RNA-binding</keyword>
<keyword id="KW-0810">Translation regulation</keyword>
<sequence>MESTQQMASSIINTSFEAAVVAATSTLELMGIQYDYNEVYTRVKSKFDYIMDDSGVKNNLLGKAATIDQALNGKFGSAVRNRNWMADTRTTARLDEDVNKLRMMLSSKGIDQKMRVLNACFSVKRVPGKSSSIIKCTRLMRDKIERGEVEVDDSFVEEKMEVDTIDWKSRYEQLEKRFESLKQRVNEKYTSWVQKAKKVNENMYSLQNVISQQQSQIADLQHYCNKLEVDLQNKISSLVSSVEWYMKSMELPGEIKTDIEQQLNSIDVINPINAIDDFESLIRNIILDYDRIFLMFKGLMRQCNYEYTYE</sequence>
<reference key="1">
    <citation type="journal article" date="2008" name="J. Virol.">
        <title>Group A human rotavirus genomics: evidence that gene constellations are influenced by viral protein interactions.</title>
        <authorList>
            <person name="Heiman E.M."/>
            <person name="McDonald S.M."/>
            <person name="Barro M."/>
            <person name="Taraporewala Z.F."/>
            <person name="Bar-Magen T."/>
            <person name="Patton J.T."/>
        </authorList>
    </citation>
    <scope>NUCLEOTIDE SEQUENCE [GENOMIC RNA]</scope>
</reference>
<name>NSP3_ROTH7</name>
<organism>
    <name type="scientific">Rotavirus A (isolate RVA/Human/United Kingdom/A64/1987/G10P11[14])</name>
    <name type="common">RV-A</name>
    <dbReference type="NCBI Taxonomy" id="578827"/>
    <lineage>
        <taxon>Viruses</taxon>
        <taxon>Riboviria</taxon>
        <taxon>Orthornavirae</taxon>
        <taxon>Duplornaviricota</taxon>
        <taxon>Resentoviricetes</taxon>
        <taxon>Reovirales</taxon>
        <taxon>Sedoreoviridae</taxon>
        <taxon>Rotavirus</taxon>
        <taxon>Rotavirus A</taxon>
    </lineage>
</organism>
<organismHost>
    <name type="scientific">Homo sapiens</name>
    <name type="common">Human</name>
    <dbReference type="NCBI Taxonomy" id="9606"/>
</organismHost>
<dbReference type="EMBL" id="EF672565">
    <property type="protein sequence ID" value="ABV53238.1"/>
    <property type="molecule type" value="Genomic_RNA"/>
</dbReference>
<dbReference type="SMR" id="B3SRR3"/>
<dbReference type="Proteomes" id="UP000001456">
    <property type="component" value="Genome"/>
</dbReference>
<dbReference type="GO" id="GO:0030430">
    <property type="term" value="C:host cell cytoplasm"/>
    <property type="evidence" value="ECO:0007669"/>
    <property type="project" value="UniProtKB-SubCell"/>
</dbReference>
<dbReference type="GO" id="GO:0003723">
    <property type="term" value="F:RNA binding"/>
    <property type="evidence" value="ECO:0007669"/>
    <property type="project" value="UniProtKB-UniRule"/>
</dbReference>
<dbReference type="GO" id="GO:0006417">
    <property type="term" value="P:regulation of translation"/>
    <property type="evidence" value="ECO:0007669"/>
    <property type="project" value="UniProtKB-UniRule"/>
</dbReference>
<dbReference type="CDD" id="cd20714">
    <property type="entry name" value="NSP3_rotavirus"/>
    <property type="match status" value="1"/>
</dbReference>
<dbReference type="Gene3D" id="3.30.70.1610">
    <property type="match status" value="1"/>
</dbReference>
<dbReference type="Gene3D" id="1.20.5.970">
    <property type="entry name" value="Nonstructural RNA-binding protein"/>
    <property type="match status" value="1"/>
</dbReference>
<dbReference type="Gene3D" id="6.10.280.20">
    <property type="entry name" value="Rotavirus non-structural protein NSP3, N-terminal domain"/>
    <property type="match status" value="1"/>
</dbReference>
<dbReference type="HAMAP" id="MF_04094">
    <property type="entry name" value="ROTA_A_NSP3"/>
    <property type="match status" value="1"/>
</dbReference>
<dbReference type="HAMAP" id="MF_04090">
    <property type="entry name" value="ROTA_NSP3"/>
    <property type="match status" value="1"/>
</dbReference>
<dbReference type="InterPro" id="IPR042519">
    <property type="entry name" value="NSP3_N_rotavirus"/>
</dbReference>
<dbReference type="InterPro" id="IPR036082">
    <property type="entry name" value="NSP3_sf"/>
</dbReference>
<dbReference type="InterPro" id="IPR002873">
    <property type="entry name" value="Rotavirus_NSP3"/>
</dbReference>
<dbReference type="Pfam" id="PF01665">
    <property type="entry name" value="Rota_NSP3"/>
    <property type="match status" value="1"/>
</dbReference>
<dbReference type="SUPFAM" id="SSF69903">
    <property type="entry name" value="NSP3 homodimer"/>
    <property type="match status" value="1"/>
</dbReference>
<dbReference type="SUPFAM" id="SSF58030">
    <property type="entry name" value="Rotavirus nonstructural proteins"/>
    <property type="match status" value="1"/>
</dbReference>
<feature type="chain" id="PRO_0000369443" description="Non-structural protein 3">
    <location>
        <begin position="1"/>
        <end position="310"/>
    </location>
</feature>
<feature type="region of interest" description="RNA-binding" evidence="1">
    <location>
        <begin position="1"/>
        <end position="146"/>
    </location>
</feature>
<feature type="region of interest" description="Dimerization" evidence="1">
    <location>
        <begin position="147"/>
        <end position="203"/>
    </location>
</feature>
<feature type="region of interest" description="Interaction with host ZC3H7B" evidence="1">
    <location>
        <begin position="167"/>
        <end position="231"/>
    </location>
</feature>
<feature type="region of interest" description="Interaction with host EIF4G1" evidence="1">
    <location>
        <begin position="205"/>
        <end position="310"/>
    </location>
</feature>
<feature type="coiled-coil region" evidence="1">
    <location>
        <begin position="163"/>
        <end position="234"/>
    </location>
</feature>
<evidence type="ECO:0000255" key="1">
    <source>
        <dbReference type="HAMAP-Rule" id="MF_04094"/>
    </source>
</evidence>
<protein>
    <recommendedName>
        <fullName evidence="1">Non-structural protein 3</fullName>
        <shortName evidence="1">NSP3</shortName>
    </recommendedName>
    <alternativeName>
        <fullName evidence="1">NCVP4</fullName>
    </alternativeName>
    <alternativeName>
        <fullName evidence="1">Non-structural RNA-binding protein 34</fullName>
        <shortName evidence="1">NS34</shortName>
    </alternativeName>
</protein>
<comment type="function">
    <text evidence="1">Plays an important role in stimulating the translation of viral mRNAs. These mRNAs are capped but not polyadenylated, instead terminating in a conserved sequence 'GACC' at the 3' that is recognized by NSP3, which competes with host PABPC1 for EIF4G1 binding. The interaction between NSP3 and host EIF4G1 stabilizes the EIF4E-EIF4G1 interaction, thereby facilitating the initiation of capped mRNA translation.</text>
</comment>
<comment type="subunit">
    <text evidence="1">Homodimer. Interacts (via the coiled-coil region) with host ZC3H7B (via LD motif). Interacts with host EIF4G1.</text>
</comment>
<comment type="subcellular location">
    <subcellularLocation>
        <location evidence="1">Host cytoplasm</location>
    </subcellularLocation>
</comment>
<comment type="similarity">
    <text evidence="1">Belongs to the rotavirus NSP3 family.</text>
</comment>
<proteinExistence type="inferred from homology"/>
<accession>B3SRR3</accession>